<accession>B0BR94</accession>
<gene>
    <name evidence="1" type="primary">valS</name>
    <name type="ordered locus">APJL_1527</name>
</gene>
<evidence type="ECO:0000255" key="1">
    <source>
        <dbReference type="HAMAP-Rule" id="MF_02004"/>
    </source>
</evidence>
<protein>
    <recommendedName>
        <fullName evidence="1">Valine--tRNA ligase</fullName>
        <ecNumber evidence="1">6.1.1.9</ecNumber>
    </recommendedName>
    <alternativeName>
        <fullName evidence="1">Valyl-tRNA synthetase</fullName>
        <shortName evidence="1">ValRS</shortName>
    </alternativeName>
</protein>
<organism>
    <name type="scientific">Actinobacillus pleuropneumoniae serotype 3 (strain JL03)</name>
    <dbReference type="NCBI Taxonomy" id="434271"/>
    <lineage>
        <taxon>Bacteria</taxon>
        <taxon>Pseudomonadati</taxon>
        <taxon>Pseudomonadota</taxon>
        <taxon>Gammaproteobacteria</taxon>
        <taxon>Pasteurellales</taxon>
        <taxon>Pasteurellaceae</taxon>
        <taxon>Actinobacillus</taxon>
    </lineage>
</organism>
<reference key="1">
    <citation type="journal article" date="2008" name="PLoS ONE">
        <title>Genome biology of Actinobacillus pleuropneumoniae JL03, an isolate of serotype 3 prevalent in China.</title>
        <authorList>
            <person name="Xu Z."/>
            <person name="Zhou Y."/>
            <person name="Li L."/>
            <person name="Zhou R."/>
            <person name="Xiao S."/>
            <person name="Wan Y."/>
            <person name="Zhang S."/>
            <person name="Wang K."/>
            <person name="Li W."/>
            <person name="Li L."/>
            <person name="Jin H."/>
            <person name="Kang M."/>
            <person name="Dalai B."/>
            <person name="Li T."/>
            <person name="Liu L."/>
            <person name="Cheng Y."/>
            <person name="Zhang L."/>
            <person name="Xu T."/>
            <person name="Zheng H."/>
            <person name="Pu S."/>
            <person name="Wang B."/>
            <person name="Gu W."/>
            <person name="Zhang X.L."/>
            <person name="Zhu G.-F."/>
            <person name="Wang S."/>
            <person name="Zhao G.-P."/>
            <person name="Chen H."/>
        </authorList>
    </citation>
    <scope>NUCLEOTIDE SEQUENCE [LARGE SCALE GENOMIC DNA]</scope>
    <source>
        <strain>JL03</strain>
    </source>
</reference>
<dbReference type="EC" id="6.1.1.9" evidence="1"/>
<dbReference type="EMBL" id="CP000687">
    <property type="protein sequence ID" value="ABY70079.1"/>
    <property type="molecule type" value="Genomic_DNA"/>
</dbReference>
<dbReference type="RefSeq" id="WP_012263264.1">
    <property type="nucleotide sequence ID" value="NC_010278.1"/>
</dbReference>
<dbReference type="SMR" id="B0BR94"/>
<dbReference type="KEGG" id="apj:APJL_1527"/>
<dbReference type="HOGENOM" id="CLU_001493_0_2_6"/>
<dbReference type="Proteomes" id="UP000008547">
    <property type="component" value="Chromosome"/>
</dbReference>
<dbReference type="GO" id="GO:0005829">
    <property type="term" value="C:cytosol"/>
    <property type="evidence" value="ECO:0007669"/>
    <property type="project" value="TreeGrafter"/>
</dbReference>
<dbReference type="GO" id="GO:0002161">
    <property type="term" value="F:aminoacyl-tRNA deacylase activity"/>
    <property type="evidence" value="ECO:0007669"/>
    <property type="project" value="InterPro"/>
</dbReference>
<dbReference type="GO" id="GO:0005524">
    <property type="term" value="F:ATP binding"/>
    <property type="evidence" value="ECO:0007669"/>
    <property type="project" value="UniProtKB-UniRule"/>
</dbReference>
<dbReference type="GO" id="GO:0004832">
    <property type="term" value="F:valine-tRNA ligase activity"/>
    <property type="evidence" value="ECO:0007669"/>
    <property type="project" value="UniProtKB-UniRule"/>
</dbReference>
<dbReference type="GO" id="GO:0006438">
    <property type="term" value="P:valyl-tRNA aminoacylation"/>
    <property type="evidence" value="ECO:0007669"/>
    <property type="project" value="UniProtKB-UniRule"/>
</dbReference>
<dbReference type="CDD" id="cd07962">
    <property type="entry name" value="Anticodon_Ia_Val"/>
    <property type="match status" value="1"/>
</dbReference>
<dbReference type="CDD" id="cd00817">
    <property type="entry name" value="ValRS_core"/>
    <property type="match status" value="1"/>
</dbReference>
<dbReference type="FunFam" id="1.10.287.380:FF:000001">
    <property type="entry name" value="Valine--tRNA ligase"/>
    <property type="match status" value="1"/>
</dbReference>
<dbReference type="FunFam" id="1.10.730.10:FF:000007">
    <property type="entry name" value="Valine--tRNA ligase"/>
    <property type="match status" value="1"/>
</dbReference>
<dbReference type="FunFam" id="3.40.50.620:FF:000032">
    <property type="entry name" value="Valine--tRNA ligase"/>
    <property type="match status" value="1"/>
</dbReference>
<dbReference type="FunFam" id="3.40.50.620:FF:000146">
    <property type="entry name" value="Valine--tRNA ligase"/>
    <property type="match status" value="1"/>
</dbReference>
<dbReference type="FunFam" id="3.90.740.10:FF:000003">
    <property type="entry name" value="Valine--tRNA ligase"/>
    <property type="match status" value="1"/>
</dbReference>
<dbReference type="FunFam" id="3.90.740.10:FF:000004">
    <property type="entry name" value="Valine--tRNA ligase"/>
    <property type="match status" value="1"/>
</dbReference>
<dbReference type="Gene3D" id="3.40.50.620">
    <property type="entry name" value="HUPs"/>
    <property type="match status" value="2"/>
</dbReference>
<dbReference type="Gene3D" id="1.10.730.10">
    <property type="entry name" value="Isoleucyl-tRNA Synthetase, Domain 1"/>
    <property type="match status" value="1"/>
</dbReference>
<dbReference type="Gene3D" id="1.10.287.380">
    <property type="entry name" value="Valyl-tRNA synthetase, C-terminal domain"/>
    <property type="match status" value="1"/>
</dbReference>
<dbReference type="Gene3D" id="3.90.740.10">
    <property type="entry name" value="Valyl/Leucyl/Isoleucyl-tRNA synthetase, editing domain"/>
    <property type="match status" value="2"/>
</dbReference>
<dbReference type="HAMAP" id="MF_02004">
    <property type="entry name" value="Val_tRNA_synth_type1"/>
    <property type="match status" value="1"/>
</dbReference>
<dbReference type="InterPro" id="IPR001412">
    <property type="entry name" value="aa-tRNA-synth_I_CS"/>
</dbReference>
<dbReference type="InterPro" id="IPR002300">
    <property type="entry name" value="aa-tRNA-synth_Ia"/>
</dbReference>
<dbReference type="InterPro" id="IPR033705">
    <property type="entry name" value="Anticodon_Ia_Val"/>
</dbReference>
<dbReference type="InterPro" id="IPR013155">
    <property type="entry name" value="M/V/L/I-tRNA-synth_anticd-bd"/>
</dbReference>
<dbReference type="InterPro" id="IPR014729">
    <property type="entry name" value="Rossmann-like_a/b/a_fold"/>
</dbReference>
<dbReference type="InterPro" id="IPR010978">
    <property type="entry name" value="tRNA-bd_arm"/>
</dbReference>
<dbReference type="InterPro" id="IPR009080">
    <property type="entry name" value="tRNAsynth_Ia_anticodon-bd"/>
</dbReference>
<dbReference type="InterPro" id="IPR037118">
    <property type="entry name" value="Val-tRNA_synth_C_sf"/>
</dbReference>
<dbReference type="InterPro" id="IPR019499">
    <property type="entry name" value="Val-tRNA_synth_tRNA-bd"/>
</dbReference>
<dbReference type="InterPro" id="IPR009008">
    <property type="entry name" value="Val/Leu/Ile-tRNA-synth_edit"/>
</dbReference>
<dbReference type="InterPro" id="IPR002303">
    <property type="entry name" value="Valyl-tRNA_ligase"/>
</dbReference>
<dbReference type="NCBIfam" id="NF004349">
    <property type="entry name" value="PRK05729.1"/>
    <property type="match status" value="1"/>
</dbReference>
<dbReference type="NCBIfam" id="TIGR00422">
    <property type="entry name" value="valS"/>
    <property type="match status" value="1"/>
</dbReference>
<dbReference type="PANTHER" id="PTHR11946:SF93">
    <property type="entry name" value="VALINE--TRNA LIGASE, CHLOROPLASTIC_MITOCHONDRIAL 2"/>
    <property type="match status" value="1"/>
</dbReference>
<dbReference type="PANTHER" id="PTHR11946">
    <property type="entry name" value="VALYL-TRNA SYNTHETASES"/>
    <property type="match status" value="1"/>
</dbReference>
<dbReference type="Pfam" id="PF08264">
    <property type="entry name" value="Anticodon_1"/>
    <property type="match status" value="1"/>
</dbReference>
<dbReference type="Pfam" id="PF00133">
    <property type="entry name" value="tRNA-synt_1"/>
    <property type="match status" value="1"/>
</dbReference>
<dbReference type="Pfam" id="PF10458">
    <property type="entry name" value="Val_tRNA-synt_C"/>
    <property type="match status" value="1"/>
</dbReference>
<dbReference type="PRINTS" id="PR00986">
    <property type="entry name" value="TRNASYNTHVAL"/>
</dbReference>
<dbReference type="SUPFAM" id="SSF47323">
    <property type="entry name" value="Anticodon-binding domain of a subclass of class I aminoacyl-tRNA synthetases"/>
    <property type="match status" value="1"/>
</dbReference>
<dbReference type="SUPFAM" id="SSF52374">
    <property type="entry name" value="Nucleotidylyl transferase"/>
    <property type="match status" value="1"/>
</dbReference>
<dbReference type="SUPFAM" id="SSF46589">
    <property type="entry name" value="tRNA-binding arm"/>
    <property type="match status" value="1"/>
</dbReference>
<dbReference type="SUPFAM" id="SSF50677">
    <property type="entry name" value="ValRS/IleRS/LeuRS editing domain"/>
    <property type="match status" value="1"/>
</dbReference>
<dbReference type="PROSITE" id="PS00178">
    <property type="entry name" value="AA_TRNA_LIGASE_I"/>
    <property type="match status" value="1"/>
</dbReference>
<feature type="chain" id="PRO_1000189238" description="Valine--tRNA ligase">
    <location>
        <begin position="1"/>
        <end position="954"/>
    </location>
</feature>
<feature type="coiled-coil region" evidence="1">
    <location>
        <begin position="883"/>
        <end position="954"/>
    </location>
</feature>
<feature type="short sequence motif" description="'HIGH' region">
    <location>
        <begin position="48"/>
        <end position="58"/>
    </location>
</feature>
<feature type="short sequence motif" description="'KMSKS' region">
    <location>
        <begin position="560"/>
        <end position="564"/>
    </location>
</feature>
<feature type="binding site" evidence="1">
    <location>
        <position position="563"/>
    </location>
    <ligand>
        <name>ATP</name>
        <dbReference type="ChEBI" id="CHEBI:30616"/>
    </ligand>
</feature>
<name>SYV_ACTPJ</name>
<keyword id="KW-0030">Aminoacyl-tRNA synthetase</keyword>
<keyword id="KW-0067">ATP-binding</keyword>
<keyword id="KW-0175">Coiled coil</keyword>
<keyword id="KW-0963">Cytoplasm</keyword>
<keyword id="KW-0436">Ligase</keyword>
<keyword id="KW-0547">Nucleotide-binding</keyword>
<keyword id="KW-0648">Protein biosynthesis</keyword>
<proteinExistence type="inferred from homology"/>
<sequence>MTQNLQMADRFDSSAVEQALYKHWEEQGYFKPTENPSLPSYCIAIPPPNVTGSLHMGHAFQQTLMDTLIRFNRMEGNNTLWQTGTDHAGIATQMVVERKIAAEEGKTRHDYGREAFINKIWDWKAYSGGTISQQMRRLGNSIDWDRERFTMDEGLSNAVKEVFVRLHEEGLIYRGKRLVNWDPKLHTAISDLEVENKESKGSLWHFRYPLANGAKTADGKDYLVVATTRPETVLGDTAVAVHPEDERYQSLIGKTVVLPLANREIPIVADEYVDREFGTGVVKITPAHDFNDYEVGKRHGLPMVNVMTMNADIRAEAEIIGTDGKPLTTYEAKIPADYQGLERFAARKKVVADFEALGLLDEIKPHDLKVPYGDRGGVPIEPMLTDQWYVSVKPLAEVATKAVEDGEIQFVPKQYENLYFSWMRDIQDWCISRQLWWGHRIPAWYDEAGNVYVARSEEEVRQKHNLPADLALRQDEDVLDTWFSSGLWTFSTLGWPEQTKELKMFHPTDVLITGFDIIFFWVARMIMFTMHFVKDENGKPQVPFKTVYVTGLIRDEQGQKMSKSKGNVLDPIDMIDGISLEDLLEKRTGNMMQPQLAEKIAKATRKEFENGIAAHGTDALRFTLAALASNGRDINWDMKRLEGYRNFCNKLWNASRFVLTNDKLDLSAGEVEYSLADRWIESKFNRTVGEFREALSQYRFDLAANAIYDFTWNEFCDWYLELTKPVFANGTEAQKRGASQTLVRVLEKLLRLAHPIMPFITEEIWQKVKGFAGIDADTIMLQPFPKVVKSELDESAEMQIGWIKELIIAVRNIRAESNIAPSKGLEFLVRNVSDEQRKILAENDRLLKAMAKLDSVQVLSADETAPLSVAKLVGNVEVLIPMAGFINKEAELARLTKEIEKMRGEITRIENKLGNEAFVAKAPEAVIAKEREKMQEYQNGLEKLQTQYQAIENL</sequence>
<comment type="function">
    <text evidence="1">Catalyzes the attachment of valine to tRNA(Val). As ValRS can inadvertently accommodate and process structurally similar amino acids such as threonine, to avoid such errors, it has a 'posttransfer' editing activity that hydrolyzes mischarged Thr-tRNA(Val) in a tRNA-dependent manner.</text>
</comment>
<comment type="catalytic activity">
    <reaction evidence="1">
        <text>tRNA(Val) + L-valine + ATP = L-valyl-tRNA(Val) + AMP + diphosphate</text>
        <dbReference type="Rhea" id="RHEA:10704"/>
        <dbReference type="Rhea" id="RHEA-COMP:9672"/>
        <dbReference type="Rhea" id="RHEA-COMP:9708"/>
        <dbReference type="ChEBI" id="CHEBI:30616"/>
        <dbReference type="ChEBI" id="CHEBI:33019"/>
        <dbReference type="ChEBI" id="CHEBI:57762"/>
        <dbReference type="ChEBI" id="CHEBI:78442"/>
        <dbReference type="ChEBI" id="CHEBI:78537"/>
        <dbReference type="ChEBI" id="CHEBI:456215"/>
        <dbReference type="EC" id="6.1.1.9"/>
    </reaction>
</comment>
<comment type="subunit">
    <text evidence="1">Monomer.</text>
</comment>
<comment type="subcellular location">
    <subcellularLocation>
        <location evidence="1">Cytoplasm</location>
    </subcellularLocation>
</comment>
<comment type="domain">
    <text evidence="1">ValRS has two distinct active sites: one for aminoacylation and one for editing. The misactivated threonine is translocated from the active site to the editing site.</text>
</comment>
<comment type="domain">
    <text evidence="1">The C-terminal coiled-coil domain is crucial for aminoacylation activity.</text>
</comment>
<comment type="similarity">
    <text evidence="1">Belongs to the class-I aminoacyl-tRNA synthetase family. ValS type 1 subfamily.</text>
</comment>